<comment type="function">
    <text evidence="6 9 10">Required for anchoring microtubules to the centrosomes (PubMed:16314388, PubMed:28659385). Required for ciliation (PubMed:28625565, PubMed:28659385).</text>
</comment>
<comment type="subunit">
    <text evidence="6 7 8 9 10">Homodimer (PubMed:16690081). Part of a ternary complex that contains CEP350, CEP43 and MAPRE1. Interacts directly with CEP350 and MAPRE1 (PubMed:16314388). Interacts with CEP19 (PubMed:28428259, PubMed:28625565, PubMed:28659385). Interacts (via N-terminus) with CEP350 (via C-terminus) (PubMed:28428259, PubMed:28625565).</text>
</comment>
<comment type="interaction">
    <interactant intactId="EBI-1266334">
        <id>O95684</id>
    </interactant>
    <interactant intactId="EBI-741885">
        <id>Q96LK0</id>
        <label>CEP19</label>
    </interactant>
    <organismsDiffer>false</organismsDiffer>
    <experiments>8</experiments>
</comment>
<comment type="interaction">
    <interactant intactId="EBI-1266334">
        <id>O95684</id>
    </interactant>
    <interactant intactId="EBI-2836148">
        <id>Q96K30</id>
        <label>RITA1</label>
    </interactant>
    <organismsDiffer>false</organismsDiffer>
    <experiments>2</experiments>
</comment>
<comment type="interaction">
    <interactant intactId="EBI-1266334">
        <id>O95684</id>
    </interactant>
    <interactant intactId="EBI-352877">
        <id>P06703</id>
        <label>S100A6</label>
    </interactant>
    <organismsDiffer>false</organismsDiffer>
    <experiments>2</experiments>
</comment>
<comment type="interaction">
    <interactant intactId="EBI-1266334">
        <id>O95684</id>
    </interactant>
    <interactant intactId="EBI-748201">
        <id>P50552</id>
        <label>VASP</label>
    </interactant>
    <organismsDiffer>false</organismsDiffer>
    <experiments>5</experiments>
</comment>
<comment type="interaction">
    <interactant intactId="EBI-1266347">
        <id>O95684-2</id>
    </interactant>
    <interactant intactId="EBI-741885">
        <id>Q96LK0</id>
        <label>CEP19</label>
    </interactant>
    <organismsDiffer>false</organismsDiffer>
    <experiments>7</experiments>
</comment>
<comment type="interaction">
    <interactant intactId="EBI-1266347">
        <id>O95684-2</id>
    </interactant>
    <interactant intactId="EBI-5235340">
        <id>Q7Z699</id>
        <label>SPRED1</label>
    </interactant>
    <organismsDiffer>false</organismsDiffer>
    <experiments>3</experiments>
</comment>
<comment type="subcellular location">
    <subcellularLocation>
        <location evidence="4 6 7 10">Cytoplasm</location>
        <location evidence="4 6 7 10">Cytoskeleton</location>
        <location evidence="4 6 7 10">Microtubule organizing center</location>
        <location evidence="4 6 7 10">Centrosome</location>
    </subcellularLocation>
    <subcellularLocation>
        <location evidence="8 9 10 11">Cytoplasm</location>
        <location evidence="8 9 10 11">Cytoskeleton</location>
        <location evidence="8 9 10 11">Microtubule organizing center</location>
        <location evidence="8 9 10 11">Centrosome</location>
        <location evidence="8 9 10 11">Centriole</location>
    </subcellularLocation>
    <subcellularLocation>
        <location evidence="10">Cytoplasm</location>
        <location evidence="10">Cytoskeleton</location>
        <location evidence="10">Cilium basal body</location>
    </subcellularLocation>
    <text evidence="6 8 9 10">Associated with gamma-tubulin (PubMed:16314388). Localizes on both mother and daughter centrioles (PubMed:28428259, PubMed:28625565). Localizes to an axial position on the mother centriole (PubMed:28625565). Localizes to the distal end of the centriole partly on the subdistal appendage region (PubMed:28659385).</text>
</comment>
<comment type="alternative products">
    <event type="alternative splicing"/>
    <isoform>
        <id>O95684-1</id>
        <name>1</name>
        <sequence type="displayed"/>
    </isoform>
    <isoform>
        <id>O95684-2</id>
        <name>2</name>
        <name>B</name>
        <sequence type="described" ref="VSP_018120"/>
    </isoform>
    <isoform>
        <id>O95684-3</id>
        <name>3</name>
        <sequence type="described" ref="VSP_018119 VSP_018121"/>
    </isoform>
</comment>
<comment type="tissue specificity">
    <text evidence="12">Ubiquitous. Highly expressed in heart, liver, muscle, kidney, intestine, colon, adrenal gland, prostate, testis, and pancreas.</text>
</comment>
<comment type="disease">
    <text evidence="12">A chromosomal aberration involving CEP43 may be a cause of stem cell myeloproliferative disorder (MPD). Translocation t(6;8)(q27;p11) with FGFR1. MPD is characterized by myeloid hyperplasia, eosinophilia and T-cell or B-cell lymphoblastic lymphoma. In general it progresses to acute myeloid leukemia. The fusion proteins CEP43-FGFR1 or FGFR1-CEP43 may exhibit constitutive kinase activity and be responsible for the transforming activity (PubMed:9949182).</text>
</comment>
<comment type="similarity">
    <text evidence="15">Belongs to the CEP43 family.</text>
</comment>
<comment type="caution">
    <text evidence="8 10">Interacting region of CEP19 is conflicting: According to a report, interacts via N-terminus (PubMed:28428259). According to another report, interacts via C-terminus (PubMed:28659385).</text>
</comment>
<comment type="online information" name="Atlas of Genetics and Cytogenetics in Oncology and Haematology">
    <link uri="https://atlasgeneticsoncology.org/gene/140/FOP"/>
</comment>
<proteinExistence type="evidence at protein level"/>
<accession>O95684</accession>
<accession>A8K1D1</accession>
<accession>B2R705</accession>
<accession>Q49AI0</accession>
<accession>Q5R3F6</accession>
<accession>Q96EW1</accession>
<name>CEP43_HUMAN</name>
<protein>
    <recommendedName>
        <fullName evidence="15">Centrosomal protein 43</fullName>
    </recommendedName>
    <alternativeName>
        <fullName>FGFR1 oncogene partner</fullName>
    </alternativeName>
</protein>
<gene>
    <name evidence="16" type="primary">CEP43</name>
    <name type="synonym">FGFR1OP</name>
    <name type="synonym">FOP</name>
</gene>
<evidence type="ECO:0000250" key="1">
    <source>
        <dbReference type="UniProtKB" id="Q66JX5"/>
    </source>
</evidence>
<evidence type="ECO:0000255" key="2">
    <source>
        <dbReference type="PROSITE-ProRule" id="PRU00126"/>
    </source>
</evidence>
<evidence type="ECO:0000256" key="3">
    <source>
        <dbReference type="SAM" id="MobiDB-lite"/>
    </source>
</evidence>
<evidence type="ECO:0000269" key="4">
    <source>
    </source>
</evidence>
<evidence type="ECO:0000269" key="5">
    <source>
    </source>
</evidence>
<evidence type="ECO:0000269" key="6">
    <source>
    </source>
</evidence>
<evidence type="ECO:0000269" key="7">
    <source>
    </source>
</evidence>
<evidence type="ECO:0000269" key="8">
    <source>
    </source>
</evidence>
<evidence type="ECO:0000269" key="9">
    <source>
    </source>
</evidence>
<evidence type="ECO:0000269" key="10">
    <source>
    </source>
</evidence>
<evidence type="ECO:0000269" key="11">
    <source>
    </source>
</evidence>
<evidence type="ECO:0000269" key="12">
    <source>
    </source>
</evidence>
<evidence type="ECO:0000303" key="13">
    <source>
    </source>
</evidence>
<evidence type="ECO:0000303" key="14">
    <source>
    </source>
</evidence>
<evidence type="ECO:0000305" key="15"/>
<evidence type="ECO:0000312" key="16">
    <source>
        <dbReference type="HGNC" id="HGNC:17012"/>
    </source>
</evidence>
<evidence type="ECO:0007744" key="17">
    <source>
    </source>
</evidence>
<evidence type="ECO:0007744" key="18">
    <source>
    </source>
</evidence>
<evidence type="ECO:0007744" key="19">
    <source>
    </source>
</evidence>
<evidence type="ECO:0007744" key="20">
    <source>
    </source>
</evidence>
<evidence type="ECO:0007744" key="21">
    <source>
    </source>
</evidence>
<evidence type="ECO:0007744" key="22">
    <source>
    </source>
</evidence>
<evidence type="ECO:0007829" key="23">
    <source>
        <dbReference type="PDB" id="2D68"/>
    </source>
</evidence>
<organism>
    <name type="scientific">Homo sapiens</name>
    <name type="common">Human</name>
    <dbReference type="NCBI Taxonomy" id="9606"/>
    <lineage>
        <taxon>Eukaryota</taxon>
        <taxon>Metazoa</taxon>
        <taxon>Chordata</taxon>
        <taxon>Craniata</taxon>
        <taxon>Vertebrata</taxon>
        <taxon>Euteleostomi</taxon>
        <taxon>Mammalia</taxon>
        <taxon>Eutheria</taxon>
        <taxon>Euarchontoglires</taxon>
        <taxon>Primates</taxon>
        <taxon>Haplorrhini</taxon>
        <taxon>Catarrhini</taxon>
        <taxon>Hominidae</taxon>
        <taxon>Homo</taxon>
    </lineage>
</organism>
<keyword id="KW-0002">3D-structure</keyword>
<keyword id="KW-0025">Alternative splicing</keyword>
<keyword id="KW-0966">Cell projection</keyword>
<keyword id="KW-0160">Chromosomal rearrangement</keyword>
<keyword id="KW-0970">Cilium biogenesis/degradation</keyword>
<keyword id="KW-0963">Cytoplasm</keyword>
<keyword id="KW-0206">Cytoskeleton</keyword>
<keyword id="KW-0597">Phosphoprotein</keyword>
<keyword id="KW-1267">Proteomics identification</keyword>
<keyword id="KW-1185">Reference proteome</keyword>
<reference key="1">
    <citation type="journal article" date="1999" name="Blood">
        <title>The t(6;8)(q27;p11) translocation in a stem cell myeloproliferative disorder fuses a novel gene, FOP, to fibroblast growth factor receptor 1.</title>
        <authorList>
            <person name="Popovici C."/>
            <person name="Zhang B."/>
            <person name="Gregoire M.-J."/>
            <person name="Jonveaux P."/>
            <person name="Lafage-Pochitaloff M."/>
            <person name="Birnbaum D."/>
            <person name="Pebusque M.-J."/>
        </authorList>
    </citation>
    <scope>NUCLEOTIDE SEQUENCE [MRNA] (ISOFORM 1)</scope>
    <scope>CHROMOSOMAL TRANSLOCATION WITH FGFR1</scope>
    <scope>ALTERNATIVE SPLICING</scope>
    <scope>TISSUE SPECIFICITY</scope>
</reference>
<reference key="2">
    <citation type="journal article" date="2004" name="Nat. Genet.">
        <title>Complete sequencing and characterization of 21,243 full-length human cDNAs.</title>
        <authorList>
            <person name="Ota T."/>
            <person name="Suzuki Y."/>
            <person name="Nishikawa T."/>
            <person name="Otsuki T."/>
            <person name="Sugiyama T."/>
            <person name="Irie R."/>
            <person name="Wakamatsu A."/>
            <person name="Hayashi K."/>
            <person name="Sato H."/>
            <person name="Nagai K."/>
            <person name="Kimura K."/>
            <person name="Makita H."/>
            <person name="Sekine M."/>
            <person name="Obayashi M."/>
            <person name="Nishi T."/>
            <person name="Shibahara T."/>
            <person name="Tanaka T."/>
            <person name="Ishii S."/>
            <person name="Yamamoto J."/>
            <person name="Saito K."/>
            <person name="Kawai Y."/>
            <person name="Isono Y."/>
            <person name="Nakamura Y."/>
            <person name="Nagahari K."/>
            <person name="Murakami K."/>
            <person name="Yasuda T."/>
            <person name="Iwayanagi T."/>
            <person name="Wagatsuma M."/>
            <person name="Shiratori A."/>
            <person name="Sudo H."/>
            <person name="Hosoiri T."/>
            <person name="Kaku Y."/>
            <person name="Kodaira H."/>
            <person name="Kondo H."/>
            <person name="Sugawara M."/>
            <person name="Takahashi M."/>
            <person name="Kanda K."/>
            <person name="Yokoi T."/>
            <person name="Furuya T."/>
            <person name="Kikkawa E."/>
            <person name="Omura Y."/>
            <person name="Abe K."/>
            <person name="Kamihara K."/>
            <person name="Katsuta N."/>
            <person name="Sato K."/>
            <person name="Tanikawa M."/>
            <person name="Yamazaki M."/>
            <person name="Ninomiya K."/>
            <person name="Ishibashi T."/>
            <person name="Yamashita H."/>
            <person name="Murakawa K."/>
            <person name="Fujimori K."/>
            <person name="Tanai H."/>
            <person name="Kimata M."/>
            <person name="Watanabe M."/>
            <person name="Hiraoka S."/>
            <person name="Chiba Y."/>
            <person name="Ishida S."/>
            <person name="Ono Y."/>
            <person name="Takiguchi S."/>
            <person name="Watanabe S."/>
            <person name="Yosida M."/>
            <person name="Hotuta T."/>
            <person name="Kusano J."/>
            <person name="Kanehori K."/>
            <person name="Takahashi-Fujii A."/>
            <person name="Hara H."/>
            <person name="Tanase T.-O."/>
            <person name="Nomura Y."/>
            <person name="Togiya S."/>
            <person name="Komai F."/>
            <person name="Hara R."/>
            <person name="Takeuchi K."/>
            <person name="Arita M."/>
            <person name="Imose N."/>
            <person name="Musashino K."/>
            <person name="Yuuki H."/>
            <person name="Oshima A."/>
            <person name="Sasaki N."/>
            <person name="Aotsuka S."/>
            <person name="Yoshikawa Y."/>
            <person name="Matsunawa H."/>
            <person name="Ichihara T."/>
            <person name="Shiohata N."/>
            <person name="Sano S."/>
            <person name="Moriya S."/>
            <person name="Momiyama H."/>
            <person name="Satoh N."/>
            <person name="Takami S."/>
            <person name="Terashima Y."/>
            <person name="Suzuki O."/>
            <person name="Nakagawa S."/>
            <person name="Senoh A."/>
            <person name="Mizoguchi H."/>
            <person name="Goto Y."/>
            <person name="Shimizu F."/>
            <person name="Wakebe H."/>
            <person name="Hishigaki H."/>
            <person name="Watanabe T."/>
            <person name="Sugiyama A."/>
            <person name="Takemoto M."/>
            <person name="Kawakami B."/>
            <person name="Yamazaki M."/>
            <person name="Watanabe K."/>
            <person name="Kumagai A."/>
            <person name="Itakura S."/>
            <person name="Fukuzumi Y."/>
            <person name="Fujimori Y."/>
            <person name="Komiyama M."/>
            <person name="Tashiro H."/>
            <person name="Tanigami A."/>
            <person name="Fujiwara T."/>
            <person name="Ono T."/>
            <person name="Yamada K."/>
            <person name="Fujii Y."/>
            <person name="Ozaki K."/>
            <person name="Hirao M."/>
            <person name="Ohmori Y."/>
            <person name="Kawabata A."/>
            <person name="Hikiji T."/>
            <person name="Kobatake N."/>
            <person name="Inagaki H."/>
            <person name="Ikema Y."/>
            <person name="Okamoto S."/>
            <person name="Okitani R."/>
            <person name="Kawakami T."/>
            <person name="Noguchi S."/>
            <person name="Itoh T."/>
            <person name="Shigeta K."/>
            <person name="Senba T."/>
            <person name="Matsumura K."/>
            <person name="Nakajima Y."/>
            <person name="Mizuno T."/>
            <person name="Morinaga M."/>
            <person name="Sasaki M."/>
            <person name="Togashi T."/>
            <person name="Oyama M."/>
            <person name="Hata H."/>
            <person name="Watanabe M."/>
            <person name="Komatsu T."/>
            <person name="Mizushima-Sugano J."/>
            <person name="Satoh T."/>
            <person name="Shirai Y."/>
            <person name="Takahashi Y."/>
            <person name="Nakagawa K."/>
            <person name="Okumura K."/>
            <person name="Nagase T."/>
            <person name="Nomura N."/>
            <person name="Kikuchi H."/>
            <person name="Masuho Y."/>
            <person name="Yamashita R."/>
            <person name="Nakai K."/>
            <person name="Yada T."/>
            <person name="Nakamura Y."/>
            <person name="Ohara O."/>
            <person name="Isogai T."/>
            <person name="Sugano S."/>
        </authorList>
    </citation>
    <scope>NUCLEOTIDE SEQUENCE [LARGE SCALE MRNA] (ISOFORMS 1 AND 2)</scope>
    <source>
        <tissue>Brain</tissue>
        <tissue>Testis</tissue>
    </source>
</reference>
<reference key="3">
    <citation type="journal article" date="2003" name="Nature">
        <title>The DNA sequence and analysis of human chromosome 6.</title>
        <authorList>
            <person name="Mungall A.J."/>
            <person name="Palmer S.A."/>
            <person name="Sims S.K."/>
            <person name="Edwards C.A."/>
            <person name="Ashurst J.L."/>
            <person name="Wilming L."/>
            <person name="Jones M.C."/>
            <person name="Horton R."/>
            <person name="Hunt S.E."/>
            <person name="Scott C.E."/>
            <person name="Gilbert J.G.R."/>
            <person name="Clamp M.E."/>
            <person name="Bethel G."/>
            <person name="Milne S."/>
            <person name="Ainscough R."/>
            <person name="Almeida J.P."/>
            <person name="Ambrose K.D."/>
            <person name="Andrews T.D."/>
            <person name="Ashwell R.I.S."/>
            <person name="Babbage A.K."/>
            <person name="Bagguley C.L."/>
            <person name="Bailey J."/>
            <person name="Banerjee R."/>
            <person name="Barker D.J."/>
            <person name="Barlow K.F."/>
            <person name="Bates K."/>
            <person name="Beare D.M."/>
            <person name="Beasley H."/>
            <person name="Beasley O."/>
            <person name="Bird C.P."/>
            <person name="Blakey S.E."/>
            <person name="Bray-Allen S."/>
            <person name="Brook J."/>
            <person name="Brown A.J."/>
            <person name="Brown J.Y."/>
            <person name="Burford D.C."/>
            <person name="Burrill W."/>
            <person name="Burton J."/>
            <person name="Carder C."/>
            <person name="Carter N.P."/>
            <person name="Chapman J.C."/>
            <person name="Clark S.Y."/>
            <person name="Clark G."/>
            <person name="Clee C.M."/>
            <person name="Clegg S."/>
            <person name="Cobley V."/>
            <person name="Collier R.E."/>
            <person name="Collins J.E."/>
            <person name="Colman L.K."/>
            <person name="Corby N.R."/>
            <person name="Coville G.J."/>
            <person name="Culley K.M."/>
            <person name="Dhami P."/>
            <person name="Davies J."/>
            <person name="Dunn M."/>
            <person name="Earthrowl M.E."/>
            <person name="Ellington A.E."/>
            <person name="Evans K.A."/>
            <person name="Faulkner L."/>
            <person name="Francis M.D."/>
            <person name="Frankish A."/>
            <person name="Frankland J."/>
            <person name="French L."/>
            <person name="Garner P."/>
            <person name="Garnett J."/>
            <person name="Ghori M.J."/>
            <person name="Gilby L.M."/>
            <person name="Gillson C.J."/>
            <person name="Glithero R.J."/>
            <person name="Grafham D.V."/>
            <person name="Grant M."/>
            <person name="Gribble S."/>
            <person name="Griffiths C."/>
            <person name="Griffiths M.N.D."/>
            <person name="Hall R."/>
            <person name="Halls K.S."/>
            <person name="Hammond S."/>
            <person name="Harley J.L."/>
            <person name="Hart E.A."/>
            <person name="Heath P.D."/>
            <person name="Heathcott R."/>
            <person name="Holmes S.J."/>
            <person name="Howden P.J."/>
            <person name="Howe K.L."/>
            <person name="Howell G.R."/>
            <person name="Huckle E."/>
            <person name="Humphray S.J."/>
            <person name="Humphries M.D."/>
            <person name="Hunt A.R."/>
            <person name="Johnson C.M."/>
            <person name="Joy A.A."/>
            <person name="Kay M."/>
            <person name="Keenan S.J."/>
            <person name="Kimberley A.M."/>
            <person name="King A."/>
            <person name="Laird G.K."/>
            <person name="Langford C."/>
            <person name="Lawlor S."/>
            <person name="Leongamornlert D.A."/>
            <person name="Leversha M."/>
            <person name="Lloyd C.R."/>
            <person name="Lloyd D.M."/>
            <person name="Loveland J.E."/>
            <person name="Lovell J."/>
            <person name="Martin S."/>
            <person name="Mashreghi-Mohammadi M."/>
            <person name="Maslen G.L."/>
            <person name="Matthews L."/>
            <person name="McCann O.T."/>
            <person name="McLaren S.J."/>
            <person name="McLay K."/>
            <person name="McMurray A."/>
            <person name="Moore M.J.F."/>
            <person name="Mullikin J.C."/>
            <person name="Niblett D."/>
            <person name="Nickerson T."/>
            <person name="Novik K.L."/>
            <person name="Oliver K."/>
            <person name="Overton-Larty E.K."/>
            <person name="Parker A."/>
            <person name="Patel R."/>
            <person name="Pearce A.V."/>
            <person name="Peck A.I."/>
            <person name="Phillimore B.J.C.T."/>
            <person name="Phillips S."/>
            <person name="Plumb R.W."/>
            <person name="Porter K.M."/>
            <person name="Ramsey Y."/>
            <person name="Ranby S.A."/>
            <person name="Rice C.M."/>
            <person name="Ross M.T."/>
            <person name="Searle S.M."/>
            <person name="Sehra H.K."/>
            <person name="Sheridan E."/>
            <person name="Skuce C.D."/>
            <person name="Smith S."/>
            <person name="Smith M."/>
            <person name="Spraggon L."/>
            <person name="Squares S.L."/>
            <person name="Steward C.A."/>
            <person name="Sycamore N."/>
            <person name="Tamlyn-Hall G."/>
            <person name="Tester J."/>
            <person name="Theaker A.J."/>
            <person name="Thomas D.W."/>
            <person name="Thorpe A."/>
            <person name="Tracey A."/>
            <person name="Tromans A."/>
            <person name="Tubby B."/>
            <person name="Wall M."/>
            <person name="Wallis J.M."/>
            <person name="West A.P."/>
            <person name="White S.S."/>
            <person name="Whitehead S.L."/>
            <person name="Whittaker H."/>
            <person name="Wild A."/>
            <person name="Willey D.J."/>
            <person name="Wilmer T.E."/>
            <person name="Wood J.M."/>
            <person name="Wray P.W."/>
            <person name="Wyatt J.C."/>
            <person name="Young L."/>
            <person name="Younger R.M."/>
            <person name="Bentley D.R."/>
            <person name="Coulson A."/>
            <person name="Durbin R.M."/>
            <person name="Hubbard T."/>
            <person name="Sulston J.E."/>
            <person name="Dunham I."/>
            <person name="Rogers J."/>
            <person name="Beck S."/>
        </authorList>
    </citation>
    <scope>NUCLEOTIDE SEQUENCE [LARGE SCALE GENOMIC DNA]</scope>
</reference>
<reference key="4">
    <citation type="submission" date="2005-09" db="EMBL/GenBank/DDBJ databases">
        <authorList>
            <person name="Mural R.J."/>
            <person name="Istrail S."/>
            <person name="Sutton G.G."/>
            <person name="Florea L."/>
            <person name="Halpern A.L."/>
            <person name="Mobarry C.M."/>
            <person name="Lippert R."/>
            <person name="Walenz B."/>
            <person name="Shatkay H."/>
            <person name="Dew I."/>
            <person name="Miller J.R."/>
            <person name="Flanigan M.J."/>
            <person name="Edwards N.J."/>
            <person name="Bolanos R."/>
            <person name="Fasulo D."/>
            <person name="Halldorsson B.V."/>
            <person name="Hannenhalli S."/>
            <person name="Turner R."/>
            <person name="Yooseph S."/>
            <person name="Lu F."/>
            <person name="Nusskern D.R."/>
            <person name="Shue B.C."/>
            <person name="Zheng X.H."/>
            <person name="Zhong F."/>
            <person name="Delcher A.L."/>
            <person name="Huson D.H."/>
            <person name="Kravitz S.A."/>
            <person name="Mouchard L."/>
            <person name="Reinert K."/>
            <person name="Remington K.A."/>
            <person name="Clark A.G."/>
            <person name="Waterman M.S."/>
            <person name="Eichler E.E."/>
            <person name="Adams M.D."/>
            <person name="Hunkapiller M.W."/>
            <person name="Myers E.W."/>
            <person name="Venter J.C."/>
        </authorList>
    </citation>
    <scope>NUCLEOTIDE SEQUENCE [LARGE SCALE GENOMIC DNA]</scope>
</reference>
<reference key="5">
    <citation type="journal article" date="2004" name="Genome Res.">
        <title>The status, quality, and expansion of the NIH full-length cDNA project: the Mammalian Gene Collection (MGC).</title>
        <authorList>
            <consortium name="The MGC Project Team"/>
        </authorList>
    </citation>
    <scope>NUCLEOTIDE SEQUENCE [LARGE SCALE MRNA] (ISOFORMS 2 AND 3)</scope>
    <scope>VARIANT ASN-271</scope>
    <source>
        <tissue>Brain</tissue>
        <tissue>Muscle</tissue>
    </source>
</reference>
<reference key="6">
    <citation type="journal article" date="2003" name="Nature">
        <title>Proteomic characterization of the human centrosome by protein correlation profiling.</title>
        <authorList>
            <person name="Andersen J.S."/>
            <person name="Wilkinson C.J."/>
            <person name="Mayor T."/>
            <person name="Mortensen P."/>
            <person name="Nigg E.A."/>
            <person name="Mann M."/>
        </authorList>
    </citation>
    <scope>IDENTIFICATION BY MASS SPECTROMETRY</scope>
    <scope>SUBCELLULAR LOCATION [LARGE SCALE ANALYSIS]</scope>
    <source>
        <tissue>Lymphoblast</tissue>
    </source>
</reference>
<reference key="7">
    <citation type="journal article" date="2004" name="Anal. Chem.">
        <title>Robust phosphoproteomic profiling of tyrosine phosphorylation sites from human T cells using immobilized metal affinity chromatography and tandem mass spectrometry.</title>
        <authorList>
            <person name="Brill L.M."/>
            <person name="Salomon A.R."/>
            <person name="Ficarro S.B."/>
            <person name="Mukherji M."/>
            <person name="Stettler-Gill M."/>
            <person name="Peters E.C."/>
        </authorList>
    </citation>
    <scope>PHOSPHORYLATION [LARGE SCALE ANALYSIS] AT SER-156 AND SER-160</scope>
    <scope>IDENTIFICATION BY MASS SPECTROMETRY [LARGE SCALE ANALYSIS]</scope>
    <source>
        <tissue>Leukemic T-cell</tissue>
    </source>
</reference>
<reference key="8">
    <citation type="journal article" date="2006" name="Cell">
        <title>Global, in vivo, and site-specific phosphorylation dynamics in signaling networks.</title>
        <authorList>
            <person name="Olsen J.V."/>
            <person name="Blagoev B."/>
            <person name="Gnad F."/>
            <person name="Macek B."/>
            <person name="Kumar C."/>
            <person name="Mortensen P."/>
            <person name="Mann M."/>
        </authorList>
    </citation>
    <scope>IDENTIFICATION BY MASS SPECTROMETRY [LARGE SCALE ANALYSIS]</scope>
    <source>
        <tissue>Cervix carcinoma</tissue>
    </source>
</reference>
<reference key="9">
    <citation type="journal article" date="2006" name="Mol. Biol. Cell">
        <title>A complex of two centrosomal proteins, CAP350 and FOP, cooperates with EB1 in microtubule anchoring.</title>
        <authorList>
            <person name="Yan X."/>
            <person name="Habedanck R."/>
            <person name="Nigg E.A."/>
        </authorList>
    </citation>
    <scope>FUNCTION</scope>
    <scope>SUBCELLULAR LOCATION</scope>
    <scope>INTERACTION WITH MAPRE1 AND CEP350</scope>
</reference>
<reference key="10">
    <citation type="journal article" date="2008" name="Proc. Natl. Acad. Sci. U.S.A.">
        <title>A quantitative atlas of mitotic phosphorylation.</title>
        <authorList>
            <person name="Dephoure N."/>
            <person name="Zhou C."/>
            <person name="Villen J."/>
            <person name="Beausoleil S.A."/>
            <person name="Bakalarski C.E."/>
            <person name="Elledge S.J."/>
            <person name="Gygi S.P."/>
        </authorList>
    </citation>
    <scope>PHOSPHORYLATION [LARGE SCALE ANALYSIS] AT SER-156; SER-160 AND SER-202</scope>
    <scope>IDENTIFICATION BY MASS SPECTROMETRY [LARGE SCALE ANALYSIS]</scope>
    <source>
        <tissue>Cervix carcinoma</tissue>
    </source>
</reference>
<reference key="11">
    <citation type="journal article" date="2009" name="Anal. Chem.">
        <title>Lys-N and trypsin cover complementary parts of the phosphoproteome in a refined SCX-based approach.</title>
        <authorList>
            <person name="Gauci S."/>
            <person name="Helbig A.O."/>
            <person name="Slijper M."/>
            <person name="Krijgsveld J."/>
            <person name="Heck A.J."/>
            <person name="Mohammed S."/>
        </authorList>
    </citation>
    <scope>IDENTIFICATION BY MASS SPECTROMETRY [LARGE SCALE ANALYSIS]</scope>
</reference>
<reference key="12">
    <citation type="journal article" date="2009" name="Sci. Signal.">
        <title>Quantitative phosphoproteomic analysis of T cell receptor signaling reveals system-wide modulation of protein-protein interactions.</title>
        <authorList>
            <person name="Mayya V."/>
            <person name="Lundgren D.H."/>
            <person name="Hwang S.-I."/>
            <person name="Rezaul K."/>
            <person name="Wu L."/>
            <person name="Eng J.K."/>
            <person name="Rodionov V."/>
            <person name="Han D.K."/>
        </authorList>
    </citation>
    <scope>PHOSPHORYLATION [LARGE SCALE ANALYSIS] AT SER-156 AND SER-160</scope>
    <scope>IDENTIFICATION BY MASS SPECTROMETRY [LARGE SCALE ANALYSIS]</scope>
    <source>
        <tissue>Leukemic T-cell</tissue>
    </source>
</reference>
<reference key="13">
    <citation type="journal article" date="2011" name="BMC Syst. Biol.">
        <title>Initial characterization of the human central proteome.</title>
        <authorList>
            <person name="Burkard T.R."/>
            <person name="Planyavsky M."/>
            <person name="Kaupe I."/>
            <person name="Breitwieser F.P."/>
            <person name="Buerckstuemmer T."/>
            <person name="Bennett K.L."/>
            <person name="Superti-Furga G."/>
            <person name="Colinge J."/>
        </authorList>
    </citation>
    <scope>IDENTIFICATION BY MASS SPECTROMETRY [LARGE SCALE ANALYSIS]</scope>
</reference>
<reference key="14">
    <citation type="journal article" date="2011" name="Sci. Signal.">
        <title>System-wide temporal characterization of the proteome and phosphoproteome of human embryonic stem cell differentiation.</title>
        <authorList>
            <person name="Rigbolt K.T."/>
            <person name="Prokhorova T.A."/>
            <person name="Akimov V."/>
            <person name="Henningsen J."/>
            <person name="Johansen P.T."/>
            <person name="Kratchmarova I."/>
            <person name="Kassem M."/>
            <person name="Mann M."/>
            <person name="Olsen J.V."/>
            <person name="Blagoev B."/>
        </authorList>
    </citation>
    <scope>PHOSPHORYLATION [LARGE SCALE ANALYSIS] AT SER-152</scope>
    <scope>IDENTIFICATION BY MASS SPECTROMETRY [LARGE SCALE ANALYSIS]</scope>
</reference>
<reference key="15">
    <citation type="journal article" date="2013" name="J. Proteome Res.">
        <title>Toward a comprehensive characterization of a human cancer cell phosphoproteome.</title>
        <authorList>
            <person name="Zhou H."/>
            <person name="Di Palma S."/>
            <person name="Preisinger C."/>
            <person name="Peng M."/>
            <person name="Polat A.N."/>
            <person name="Heck A.J."/>
            <person name="Mohammed S."/>
        </authorList>
    </citation>
    <scope>PHOSPHORYLATION [LARGE SCALE ANALYSIS] AT SER-152; SER-156; SER-160; THR-170; SER-202; THR-234; SER-301 AND SER-326</scope>
    <scope>IDENTIFICATION BY MASS SPECTROMETRY [LARGE SCALE ANALYSIS]</scope>
    <source>
        <tissue>Cervix carcinoma</tissue>
        <tissue>Erythroleukemia</tissue>
    </source>
</reference>
<reference key="16">
    <citation type="journal article" date="2014" name="J. Proteomics">
        <title>An enzyme assisted RP-RPLC approach for in-depth analysis of human liver phosphoproteome.</title>
        <authorList>
            <person name="Bian Y."/>
            <person name="Song C."/>
            <person name="Cheng K."/>
            <person name="Dong M."/>
            <person name="Wang F."/>
            <person name="Huang J."/>
            <person name="Sun D."/>
            <person name="Wang L."/>
            <person name="Ye M."/>
            <person name="Zou H."/>
        </authorList>
    </citation>
    <scope>PHOSPHORYLATION [LARGE SCALE ANALYSIS] AT THR-143 AND SER-160</scope>
    <scope>IDENTIFICATION BY MASS SPECTROMETRY [LARGE SCALE ANALYSIS]</scope>
    <source>
        <tissue>Liver</tissue>
    </source>
</reference>
<reference key="17">
    <citation type="journal article" date="2017" name="Dev. Cell">
        <title>The CEP19-RABL2 GTPase complex binds IFT-B to initiate intraflagellar transport at the ciliary base.</title>
        <authorList>
            <person name="Kanie T."/>
            <person name="Abbott K.L."/>
            <person name="Mooney N.A."/>
            <person name="Plowey E.D."/>
            <person name="Demeter J."/>
            <person name="Jackson P.K."/>
        </authorList>
    </citation>
    <scope>FUNCTION</scope>
    <scope>INTERACTION WITH CEP19 AND CEP350</scope>
    <scope>SUBCELLULAR LOCATION</scope>
    <scope>PHYLOGENETIC ANALYSIS</scope>
</reference>
<reference key="18">
    <citation type="journal article" date="2017" name="Mol. Biol. Cell">
        <title>RABL2 interacts with the intraflagellar transport-B complex and CEP19 and participates in ciliary assembly.</title>
        <authorList>
            <person name="Nishijima Y."/>
            <person name="Hagiya Y."/>
            <person name="Kubo T."/>
            <person name="Takei R."/>
            <person name="Katoh Y."/>
            <person name="Nakayama K."/>
        </authorList>
    </citation>
    <scope>INTERACTION WITH CEP19 AND CEP350</scope>
    <scope>SUBCELLULAR LOCATION</scope>
</reference>
<reference key="19">
    <citation type="journal article" date="2017" name="Open Biol.">
        <title>CEP19 cooperates with FOP and CEP350 to drive early steps in the ciliogenesis programme.</title>
        <authorList>
            <person name="Mojarad B.A."/>
            <person name="Gupta G.D."/>
            <person name="Hasegan M."/>
            <person name="Goudiam O."/>
            <person name="Basto R."/>
            <person name="Gingras A.C."/>
            <person name="Pelletier L."/>
        </authorList>
    </citation>
    <scope>FUNCTION</scope>
    <scope>INTERACTION WITH CEP19</scope>
    <scope>SUBCELLULAR LOCATION</scope>
</reference>
<reference key="20">
    <citation type="journal article" date="2020" name="Elife">
        <title>WDR90 is a centriolar microtubule wall protein important for centriole architecture integrity.</title>
        <authorList>
            <person name="Steib E."/>
            <person name="Laporte M.H."/>
            <person name="Gambarotto D."/>
            <person name="Olieric N."/>
            <person name="Zheng C."/>
            <person name="Borgers S."/>
            <person name="Olieric V."/>
            <person name="Le Guennec M."/>
            <person name="Koll F."/>
            <person name="Tassin A.M."/>
            <person name="Steinmetz M.O."/>
            <person name="Guichard P."/>
            <person name="Hamel V."/>
        </authorList>
    </citation>
    <scope>SUBCELLULAR LOCATION</scope>
</reference>
<reference key="21">
    <citation type="journal article" date="2006" name="J. Mol. Biol.">
        <title>Structure of the N-terminal domain of the FOP (FGFR1OP) protein and implications for its dimerization and centrosomal localization.</title>
        <authorList>
            <person name="Mikolajka A."/>
            <person name="Yan X."/>
            <person name="Popowicz G.M."/>
            <person name="Smialowski P."/>
            <person name="Nigg E.A."/>
            <person name="Holak T.A."/>
        </authorList>
    </citation>
    <scope>X-RAY CRYSTALLOGRAPHY (1.6 ANGSTROMS) OF 54-134</scope>
    <scope>MUTAGENESIS OF VAL-74</scope>
    <scope>SUBCELLULAR LOCATION</scope>
    <scope>SUBUNIT</scope>
</reference>
<feature type="chain" id="PRO_0000233293" description="Centrosomal protein 43">
    <location>
        <begin position="1"/>
        <end position="399"/>
    </location>
</feature>
<feature type="domain" description="LisH" evidence="2">
    <location>
        <begin position="70"/>
        <end position="102"/>
    </location>
</feature>
<feature type="region of interest" description="Disordered" evidence="3">
    <location>
        <begin position="139"/>
        <end position="218"/>
    </location>
</feature>
<feature type="region of interest" description="Disordered" evidence="3">
    <location>
        <begin position="232"/>
        <end position="308"/>
    </location>
</feature>
<feature type="region of interest" description="Disordered" evidence="3">
    <location>
        <begin position="331"/>
        <end position="353"/>
    </location>
</feature>
<feature type="compositionally biased region" description="Polar residues" evidence="3">
    <location>
        <begin position="163"/>
        <end position="172"/>
    </location>
</feature>
<feature type="compositionally biased region" description="Basic residues" evidence="3">
    <location>
        <begin position="175"/>
        <end position="186"/>
    </location>
</feature>
<feature type="compositionally biased region" description="Low complexity" evidence="3">
    <location>
        <begin position="205"/>
        <end position="218"/>
    </location>
</feature>
<feature type="compositionally biased region" description="Acidic residues" evidence="3">
    <location>
        <begin position="245"/>
        <end position="256"/>
    </location>
</feature>
<feature type="compositionally biased region" description="Basic and acidic residues" evidence="3">
    <location>
        <begin position="259"/>
        <end position="275"/>
    </location>
</feature>
<feature type="compositionally biased region" description="Low complexity" evidence="3">
    <location>
        <begin position="286"/>
        <end position="302"/>
    </location>
</feature>
<feature type="site" description="Breakpoint for translocation to form CEP43-FGFR1 or FGFR1-CEP43 fusion proteins">
    <location>
        <begin position="173"/>
        <end position="174"/>
    </location>
</feature>
<feature type="modified residue" description="Phosphothreonine" evidence="22">
    <location>
        <position position="143"/>
    </location>
</feature>
<feature type="modified residue" description="Phosphoserine" evidence="20 21">
    <location>
        <position position="152"/>
    </location>
</feature>
<feature type="modified residue" description="Phosphoserine" evidence="17 18 19 21">
    <location>
        <position position="156"/>
    </location>
</feature>
<feature type="modified residue" description="Phosphoserine" evidence="17 18 19 21 22">
    <location>
        <position position="160"/>
    </location>
</feature>
<feature type="modified residue" description="Phosphothreonine" evidence="21">
    <location>
        <position position="170"/>
    </location>
</feature>
<feature type="modified residue" description="Phosphoserine" evidence="18 21">
    <location>
        <position position="202"/>
    </location>
</feature>
<feature type="modified residue" description="Phosphothreonine" evidence="21">
    <location>
        <position position="234"/>
    </location>
</feature>
<feature type="modified residue" description="Phosphoserine" evidence="21">
    <location>
        <position position="301"/>
    </location>
</feature>
<feature type="modified residue" description="Phosphoserine" evidence="21">
    <location>
        <position position="326"/>
    </location>
</feature>
<feature type="modified residue" description="Phosphotyrosine" evidence="1">
    <location>
        <position position="337"/>
    </location>
</feature>
<feature type="splice variant" id="VSP_018119" description="In isoform 3." evidence="14">
    <location>
        <begin position="1"/>
        <end position="249"/>
    </location>
</feature>
<feature type="splice variant" id="VSP_018120" description="In isoform 2." evidence="13 14">
    <location>
        <begin position="174"/>
        <end position="193"/>
    </location>
</feature>
<feature type="splice variant" id="VSP_018121" description="In isoform 3." evidence="14">
    <original>LDDLTQDLTVSQLSDVADYLEDVA</original>
    <variation>TITQLECLLSIGALHFKNTADIF</variation>
    <location>
        <begin position="376"/>
        <end position="399"/>
    </location>
</feature>
<feature type="sequence variant" id="VAR_061651" description="In dbSNP:rs34617108.">
    <original>A</original>
    <variation>G</variation>
    <location>
        <position position="190"/>
    </location>
</feature>
<feature type="sequence variant" id="VAR_051000" description="In dbSNP:rs17856382." evidence="5">
    <original>K</original>
    <variation>N</variation>
    <location>
        <position position="271"/>
    </location>
</feature>
<feature type="mutagenesis site" description="Abolishes homodimerization and leads to aggregation." evidence="7">
    <original>V</original>
    <variation>F</variation>
    <location>
        <position position="74"/>
    </location>
</feature>
<feature type="sequence conflict" description="In Ref. 5; AAH11902." evidence="15" ref="5">
    <original>K</original>
    <variation>R</variation>
    <location>
        <position position="63"/>
    </location>
</feature>
<feature type="helix" evidence="23">
    <location>
        <begin position="60"/>
        <end position="66"/>
    </location>
</feature>
<feature type="helix" evidence="23">
    <location>
        <begin position="69"/>
        <end position="84"/>
    </location>
</feature>
<feature type="helix" evidence="23">
    <location>
        <begin position="88"/>
        <end position="98"/>
    </location>
</feature>
<feature type="helix" evidence="23">
    <location>
        <begin position="107"/>
        <end position="113"/>
    </location>
</feature>
<feature type="turn" evidence="23">
    <location>
        <begin position="120"/>
        <end position="124"/>
    </location>
</feature>
<feature type="helix" evidence="23">
    <location>
        <begin position="127"/>
        <end position="134"/>
    </location>
</feature>
<sequence length="399" mass="43065">MAATAAAVVAEEDTELRDLLVQTLENSGVLNRIKAELRAAVFLALEEQEKVENKTPLVNESLKKFLNTKDGRLVASLVAEFLQFFNLDFTLAVFQPETSTLQGLEGRENLARDLGIIEAEGTVGGPLLLEVIRRCQQKEKGPTTGEGALDLSDVHSPPKSPEGKTSAQTTPSKIPRYKGQGKKKTSGQKAGDKKANDEANQSDTSVSLSEPKSKSSLHLLSHETKIGSFLSNRTLDGKDKAGLCPDEDDMEGDSFFDDPIPKPEKTYGLRKEPRKQAGSLASLSDAPPLKSGLSSLAGAPSLKDSESKRGNTVLKDLKLISDKIGSLGLGTGEDDDYVDDFNSTSHRSEKSEISIGEEIEEDLSVEIDDINTSDKLDDLTQDLTVSQLSDVADYLEDVA</sequence>
<dbReference type="EMBL" id="Y18046">
    <property type="protein sequence ID" value="CAA77020.1"/>
    <property type="molecule type" value="mRNA"/>
</dbReference>
<dbReference type="EMBL" id="AK289846">
    <property type="protein sequence ID" value="BAF82535.1"/>
    <property type="molecule type" value="mRNA"/>
</dbReference>
<dbReference type="EMBL" id="AK312791">
    <property type="protein sequence ID" value="BAG35652.1"/>
    <property type="molecule type" value="mRNA"/>
</dbReference>
<dbReference type="EMBL" id="Z94721">
    <property type="status" value="NOT_ANNOTATED_CDS"/>
    <property type="molecule type" value="Genomic_DNA"/>
</dbReference>
<dbReference type="EMBL" id="CH471051">
    <property type="protein sequence ID" value="EAW47509.1"/>
    <property type="molecule type" value="Genomic_DNA"/>
</dbReference>
<dbReference type="EMBL" id="CH471051">
    <property type="protein sequence ID" value="EAW47510.1"/>
    <property type="molecule type" value="Genomic_DNA"/>
</dbReference>
<dbReference type="EMBL" id="BC011902">
    <property type="protein sequence ID" value="AAH11902.1"/>
    <property type="molecule type" value="mRNA"/>
</dbReference>
<dbReference type="EMBL" id="BC037785">
    <property type="protein sequence ID" value="AAH37785.1"/>
    <property type="molecule type" value="mRNA"/>
</dbReference>
<dbReference type="CCDS" id="CCDS5296.1">
    <molecule id="O95684-1"/>
</dbReference>
<dbReference type="CCDS" id="CCDS5297.1">
    <molecule id="O95684-2"/>
</dbReference>
<dbReference type="RefSeq" id="NP_008976.1">
    <molecule id="O95684-1"/>
    <property type="nucleotide sequence ID" value="NM_007045.4"/>
</dbReference>
<dbReference type="RefSeq" id="NP_919410.1">
    <molecule id="O95684-2"/>
    <property type="nucleotide sequence ID" value="NM_194429.3"/>
</dbReference>
<dbReference type="PDB" id="2D68">
    <property type="method" value="X-ray"/>
    <property type="resolution" value="1.60 A"/>
    <property type="chains" value="A/B=54-134"/>
</dbReference>
<dbReference type="PDBsum" id="2D68"/>
<dbReference type="SMR" id="O95684"/>
<dbReference type="BioGRID" id="116291">
    <property type="interactions" value="209"/>
</dbReference>
<dbReference type="CORUM" id="O95684"/>
<dbReference type="FunCoup" id="O95684">
    <property type="interactions" value="2579"/>
</dbReference>
<dbReference type="IntAct" id="O95684">
    <property type="interactions" value="187"/>
</dbReference>
<dbReference type="MINT" id="O95684"/>
<dbReference type="STRING" id="9606.ENSP00000355812"/>
<dbReference type="GlyGen" id="O95684">
    <property type="glycosylation" value="2 sites, 1 O-linked glycan (1 site)"/>
</dbReference>
<dbReference type="iPTMnet" id="O95684"/>
<dbReference type="PhosphoSitePlus" id="O95684"/>
<dbReference type="BioMuta" id="FGFR1OP"/>
<dbReference type="jPOST" id="O95684"/>
<dbReference type="MassIVE" id="O95684"/>
<dbReference type="PaxDb" id="9606-ENSP00000355812"/>
<dbReference type="PeptideAtlas" id="O95684"/>
<dbReference type="ProteomicsDB" id="50996">
    <molecule id="O95684-1"/>
</dbReference>
<dbReference type="ProteomicsDB" id="50997">
    <molecule id="O95684-2"/>
</dbReference>
<dbReference type="ProteomicsDB" id="50998">
    <molecule id="O95684-3"/>
</dbReference>
<dbReference type="Pumba" id="O95684"/>
<dbReference type="Antibodypedia" id="33532">
    <property type="antibodies" value="292 antibodies from 32 providers"/>
</dbReference>
<dbReference type="DNASU" id="11116"/>
<dbReference type="Ensembl" id="ENST00000349556.5">
    <molecule id="O95684-2"/>
    <property type="protein sequence ID" value="ENSP00000230248.6"/>
    <property type="gene ID" value="ENSG00000213066.14"/>
</dbReference>
<dbReference type="Ensembl" id="ENST00000366847.9">
    <molecule id="O95684-1"/>
    <property type="protein sequence ID" value="ENSP00000355812.3"/>
    <property type="gene ID" value="ENSG00000213066.14"/>
</dbReference>
<dbReference type="Ensembl" id="ENST00000705170.1">
    <molecule id="O95684-3"/>
    <property type="protein sequence ID" value="ENSP00000516073.1"/>
    <property type="gene ID" value="ENSG00000213066.14"/>
</dbReference>
<dbReference type="GeneID" id="11116"/>
<dbReference type="KEGG" id="hsa:11116"/>
<dbReference type="MANE-Select" id="ENST00000366847.9">
    <property type="protein sequence ID" value="ENSP00000355812.3"/>
    <property type="RefSeq nucleotide sequence ID" value="NM_007045.4"/>
    <property type="RefSeq protein sequence ID" value="NP_008976.1"/>
</dbReference>
<dbReference type="UCSC" id="uc003qvj.5">
    <molecule id="O95684-1"/>
    <property type="organism name" value="human"/>
</dbReference>
<dbReference type="AGR" id="HGNC:17012"/>
<dbReference type="CTD" id="11116"/>
<dbReference type="DisGeNET" id="11116"/>
<dbReference type="GeneCards" id="CEP43"/>
<dbReference type="HGNC" id="HGNC:17012">
    <property type="gene designation" value="CEP43"/>
</dbReference>
<dbReference type="HPA" id="ENSG00000213066">
    <property type="expression patterns" value="Tissue enhanced (testis)"/>
</dbReference>
<dbReference type="MalaCards" id="CEP43"/>
<dbReference type="MIM" id="605392">
    <property type="type" value="gene"/>
</dbReference>
<dbReference type="neXtProt" id="NX_O95684"/>
<dbReference type="OpenTargets" id="ENSG00000213066"/>
<dbReference type="PharmGKB" id="PA134941638"/>
<dbReference type="VEuPathDB" id="HostDB:ENSG00000213066"/>
<dbReference type="eggNOG" id="ENOG502QR70">
    <property type="taxonomic scope" value="Eukaryota"/>
</dbReference>
<dbReference type="GeneTree" id="ENSGT00390000007441"/>
<dbReference type="HOGENOM" id="CLU_039837_2_0_1"/>
<dbReference type="InParanoid" id="O95684"/>
<dbReference type="OMA" id="DITQDHT"/>
<dbReference type="OrthoDB" id="2160638at2759"/>
<dbReference type="PAN-GO" id="O95684">
    <property type="GO annotations" value="1 GO annotation based on evolutionary models"/>
</dbReference>
<dbReference type="PhylomeDB" id="O95684"/>
<dbReference type="TreeFam" id="TF331893"/>
<dbReference type="PathwayCommons" id="O95684"/>
<dbReference type="Reactome" id="R-HSA-1839117">
    <property type="pathway name" value="Signaling by cytosolic FGFR1 fusion mutants"/>
</dbReference>
<dbReference type="Reactome" id="R-HSA-2565942">
    <property type="pathway name" value="Regulation of PLK1 Activity at G2/M Transition"/>
</dbReference>
<dbReference type="Reactome" id="R-HSA-380259">
    <property type="pathway name" value="Loss of Nlp from mitotic centrosomes"/>
</dbReference>
<dbReference type="Reactome" id="R-HSA-380270">
    <property type="pathway name" value="Recruitment of mitotic centrosome proteins and complexes"/>
</dbReference>
<dbReference type="Reactome" id="R-HSA-380284">
    <property type="pathway name" value="Loss of proteins required for interphase microtubule organization from the centrosome"/>
</dbReference>
<dbReference type="Reactome" id="R-HSA-380320">
    <property type="pathway name" value="Recruitment of NuMA to mitotic centrosomes"/>
</dbReference>
<dbReference type="Reactome" id="R-HSA-5620912">
    <property type="pathway name" value="Anchoring of the basal body to the plasma membrane"/>
</dbReference>
<dbReference type="Reactome" id="R-HSA-5655302">
    <property type="pathway name" value="Signaling by FGFR1 in disease"/>
</dbReference>
<dbReference type="Reactome" id="R-HSA-8854518">
    <property type="pathway name" value="AURKA Activation by TPX2"/>
</dbReference>
<dbReference type="SignaLink" id="O95684"/>
<dbReference type="SIGNOR" id="O95684"/>
<dbReference type="BioGRID-ORCS" id="11116">
    <property type="hits" value="358 hits in 1174 CRISPR screens"/>
</dbReference>
<dbReference type="CD-CODE" id="8C2F96ED">
    <property type="entry name" value="Centrosome"/>
</dbReference>
<dbReference type="ChiTaRS" id="FGFR1OP">
    <property type="organism name" value="human"/>
</dbReference>
<dbReference type="EvolutionaryTrace" id="O95684"/>
<dbReference type="GeneWiki" id="FGFR1OP"/>
<dbReference type="GenomeRNAi" id="11116"/>
<dbReference type="Pharos" id="O95684">
    <property type="development level" value="Tbio"/>
</dbReference>
<dbReference type="PRO" id="PR:O95684"/>
<dbReference type="Proteomes" id="UP000005640">
    <property type="component" value="Chromosome 6"/>
</dbReference>
<dbReference type="RNAct" id="O95684">
    <property type="molecule type" value="protein"/>
</dbReference>
<dbReference type="Bgee" id="ENSG00000213066">
    <property type="expression patterns" value="Expressed in sperm and 196 other cell types or tissues"/>
</dbReference>
<dbReference type="ExpressionAtlas" id="O95684">
    <property type="expression patterns" value="baseline and differential"/>
</dbReference>
<dbReference type="GO" id="GO:0042995">
    <property type="term" value="C:cell projection"/>
    <property type="evidence" value="ECO:0007669"/>
    <property type="project" value="UniProtKB-KW"/>
</dbReference>
<dbReference type="GO" id="GO:0005814">
    <property type="term" value="C:centriole"/>
    <property type="evidence" value="ECO:0000314"/>
    <property type="project" value="UniProtKB"/>
</dbReference>
<dbReference type="GO" id="GO:0005813">
    <property type="term" value="C:centrosome"/>
    <property type="evidence" value="ECO:0000314"/>
    <property type="project" value="UniProtKB"/>
</dbReference>
<dbReference type="GO" id="GO:0005829">
    <property type="term" value="C:cytosol"/>
    <property type="evidence" value="ECO:0000304"/>
    <property type="project" value="Reactome"/>
</dbReference>
<dbReference type="GO" id="GO:0005634">
    <property type="term" value="C:nucleus"/>
    <property type="evidence" value="ECO:0000314"/>
    <property type="project" value="UniProtKB"/>
</dbReference>
<dbReference type="GO" id="GO:0048471">
    <property type="term" value="C:perinuclear region of cytoplasm"/>
    <property type="evidence" value="ECO:0000314"/>
    <property type="project" value="UniProtKB"/>
</dbReference>
<dbReference type="GO" id="GO:0042803">
    <property type="term" value="F:protein homodimerization activity"/>
    <property type="evidence" value="ECO:0000314"/>
    <property type="project" value="UniProtKB"/>
</dbReference>
<dbReference type="GO" id="GO:0019901">
    <property type="term" value="F:protein kinase binding"/>
    <property type="evidence" value="ECO:0000353"/>
    <property type="project" value="UniProtKB"/>
</dbReference>
<dbReference type="GO" id="GO:0030292">
    <property type="term" value="F:protein tyrosine kinase inhibitor activity"/>
    <property type="evidence" value="ECO:0000314"/>
    <property type="project" value="UniProtKB"/>
</dbReference>
<dbReference type="GO" id="GO:0030030">
    <property type="term" value="P:cell projection organization"/>
    <property type="evidence" value="ECO:0007669"/>
    <property type="project" value="UniProtKB-KW"/>
</dbReference>
<dbReference type="GO" id="GO:0034453">
    <property type="term" value="P:microtubule anchoring"/>
    <property type="evidence" value="ECO:0007669"/>
    <property type="project" value="InterPro"/>
</dbReference>
<dbReference type="GO" id="GO:0006469">
    <property type="term" value="P:negative regulation of protein kinase activity"/>
    <property type="evidence" value="ECO:0000314"/>
    <property type="project" value="UniProtKB"/>
</dbReference>
<dbReference type="GO" id="GO:0030307">
    <property type="term" value="P:positive regulation of cell growth"/>
    <property type="evidence" value="ECO:0000314"/>
    <property type="project" value="UniProtKB"/>
</dbReference>
<dbReference type="GO" id="GO:0030335">
    <property type="term" value="P:positive regulation of cell migration"/>
    <property type="evidence" value="ECO:0000314"/>
    <property type="project" value="UniProtKB"/>
</dbReference>
<dbReference type="GO" id="GO:0008284">
    <property type="term" value="P:positive regulation of cell population proliferation"/>
    <property type="evidence" value="ECO:0000314"/>
    <property type="project" value="UniProtKB"/>
</dbReference>
<dbReference type="FunFam" id="1.20.960.40:FF:000001">
    <property type="entry name" value="FGFR1 oncogene partner"/>
    <property type="match status" value="1"/>
</dbReference>
<dbReference type="Gene3D" id="1.20.960.40">
    <property type="match status" value="1"/>
</dbReference>
<dbReference type="InterPro" id="IPR018993">
    <property type="entry name" value="FOP_dimerisation-dom_N"/>
</dbReference>
<dbReference type="InterPro" id="IPR006594">
    <property type="entry name" value="LisH"/>
</dbReference>
<dbReference type="PANTHER" id="PTHR15431:SF9">
    <property type="entry name" value="CENTROSOMAL PROTEIN 43"/>
    <property type="match status" value="1"/>
</dbReference>
<dbReference type="PANTHER" id="PTHR15431">
    <property type="entry name" value="FGFR1 ONCOGENE PARTNER/LISH DOMAIN-CONTAINING PROTEIN"/>
    <property type="match status" value="1"/>
</dbReference>
<dbReference type="Pfam" id="PF09398">
    <property type="entry name" value="FOP_dimer"/>
    <property type="match status" value="1"/>
</dbReference>
<dbReference type="PROSITE" id="PS50896">
    <property type="entry name" value="LISH"/>
    <property type="match status" value="1"/>
</dbReference>